<comment type="function">
    <text>Beta-type chain found in early embryos.</text>
</comment>
<comment type="subunit">
    <text>Heterotetramer of two epsilon chains and two alpha chains.</text>
</comment>
<comment type="tissue specificity">
    <text>Red blood cells.</text>
</comment>
<comment type="similarity">
    <text evidence="1">Belongs to the globin family.</text>
</comment>
<gene>
    <name type="primary">HBE</name>
</gene>
<name>HBE_CAIMO</name>
<accession>P14261</accession>
<protein>
    <recommendedName>
        <fullName>Hemoglobin subunit epsilon</fullName>
    </recommendedName>
    <alternativeName>
        <fullName>Epsilon-globin</fullName>
    </alternativeName>
    <alternativeName>
        <fullName>Hemoglobin epsilon chain</fullName>
    </alternativeName>
</protein>
<reference key="1">
    <citation type="journal article" date="1990" name="Nucleic Acids Res.">
        <title>Nucleotide sequence of the gene encoding the duck embryonic epsilon-globin.</title>
        <authorList>
            <person name="Mathieu-Kolling C."/>
            <person name="Niessing J."/>
        </authorList>
    </citation>
    <scope>NUCLEOTIDE SEQUENCE [GENOMIC DNA]</scope>
</reference>
<keyword id="KW-0349">Heme</keyword>
<keyword id="KW-0408">Iron</keyword>
<keyword id="KW-0479">Metal-binding</keyword>
<keyword id="KW-0561">Oxygen transport</keyword>
<keyword id="KW-1185">Reference proteome</keyword>
<keyword id="KW-0813">Transport</keyword>
<proteinExistence type="evidence at transcript level"/>
<feature type="initiator methionine" description="Removed">
    <location>
        <position position="1"/>
    </location>
</feature>
<feature type="chain" id="PRO_0000053192" description="Hemoglobin subunit epsilon">
    <location>
        <begin position="2"/>
        <end position="147"/>
    </location>
</feature>
<feature type="domain" description="Globin" evidence="1">
    <location>
        <begin position="3"/>
        <end position="147"/>
    </location>
</feature>
<feature type="binding site" description="distal binding residue" evidence="1">
    <location>
        <position position="64"/>
    </location>
    <ligand>
        <name>heme b</name>
        <dbReference type="ChEBI" id="CHEBI:60344"/>
    </ligand>
    <ligandPart>
        <name>Fe</name>
        <dbReference type="ChEBI" id="CHEBI:18248"/>
    </ligandPart>
</feature>
<feature type="binding site" description="proximal binding residue" evidence="1">
    <location>
        <position position="93"/>
    </location>
    <ligand>
        <name>heme b</name>
        <dbReference type="ChEBI" id="CHEBI:60344"/>
    </ligand>
    <ligandPart>
        <name>Fe</name>
        <dbReference type="ChEBI" id="CHEBI:18248"/>
    </ligandPart>
</feature>
<evidence type="ECO:0000255" key="1">
    <source>
        <dbReference type="PROSITE-ProRule" id="PRU00238"/>
    </source>
</evidence>
<organism>
    <name type="scientific">Cairina moschata</name>
    <name type="common">Muscovy duck</name>
    <dbReference type="NCBI Taxonomy" id="8855"/>
    <lineage>
        <taxon>Eukaryota</taxon>
        <taxon>Metazoa</taxon>
        <taxon>Chordata</taxon>
        <taxon>Craniata</taxon>
        <taxon>Vertebrata</taxon>
        <taxon>Euteleostomi</taxon>
        <taxon>Archelosauria</taxon>
        <taxon>Archosauria</taxon>
        <taxon>Dinosauria</taxon>
        <taxon>Saurischia</taxon>
        <taxon>Theropoda</taxon>
        <taxon>Coelurosauria</taxon>
        <taxon>Aves</taxon>
        <taxon>Neognathae</taxon>
        <taxon>Galloanserae</taxon>
        <taxon>Anseriformes</taxon>
        <taxon>Anatidae</taxon>
        <taxon>Anatinae</taxon>
        <taxon>Cairina</taxon>
    </lineage>
</organism>
<sequence>MVHWSAEEKQLITGLWGKVNVEECGAEALARLLIVYPWTQRFFSSFGNLSSPTAIIGNPKVPPHGRKFFTSFGEPVKNLDNIKNTYAKLSELHCEKLQVEPENFRLLGDILIIVLASHFARDFTPACQFPWQKLVSVVAHALPRKYH</sequence>
<dbReference type="EMBL" id="X15740">
    <property type="protein sequence ID" value="CAA33757.1"/>
    <property type="molecule type" value="Genomic_DNA"/>
</dbReference>
<dbReference type="PIR" id="S14685">
    <property type="entry name" value="HEDKM"/>
</dbReference>
<dbReference type="SMR" id="P14261"/>
<dbReference type="Proteomes" id="UP000694556">
    <property type="component" value="Unplaced"/>
</dbReference>
<dbReference type="GO" id="GO:0072562">
    <property type="term" value="C:blood microparticle"/>
    <property type="evidence" value="ECO:0007669"/>
    <property type="project" value="TreeGrafter"/>
</dbReference>
<dbReference type="GO" id="GO:0031838">
    <property type="term" value="C:haptoglobin-hemoglobin complex"/>
    <property type="evidence" value="ECO:0007669"/>
    <property type="project" value="TreeGrafter"/>
</dbReference>
<dbReference type="GO" id="GO:0005833">
    <property type="term" value="C:hemoglobin complex"/>
    <property type="evidence" value="ECO:0007669"/>
    <property type="project" value="InterPro"/>
</dbReference>
<dbReference type="GO" id="GO:0031720">
    <property type="term" value="F:haptoglobin binding"/>
    <property type="evidence" value="ECO:0007669"/>
    <property type="project" value="TreeGrafter"/>
</dbReference>
<dbReference type="GO" id="GO:0020037">
    <property type="term" value="F:heme binding"/>
    <property type="evidence" value="ECO:0007669"/>
    <property type="project" value="InterPro"/>
</dbReference>
<dbReference type="GO" id="GO:0046872">
    <property type="term" value="F:metal ion binding"/>
    <property type="evidence" value="ECO:0007669"/>
    <property type="project" value="UniProtKB-KW"/>
</dbReference>
<dbReference type="GO" id="GO:0043177">
    <property type="term" value="F:organic acid binding"/>
    <property type="evidence" value="ECO:0007669"/>
    <property type="project" value="TreeGrafter"/>
</dbReference>
<dbReference type="GO" id="GO:0019825">
    <property type="term" value="F:oxygen binding"/>
    <property type="evidence" value="ECO:0007669"/>
    <property type="project" value="InterPro"/>
</dbReference>
<dbReference type="GO" id="GO:0005344">
    <property type="term" value="F:oxygen carrier activity"/>
    <property type="evidence" value="ECO:0007669"/>
    <property type="project" value="UniProtKB-KW"/>
</dbReference>
<dbReference type="GO" id="GO:0004601">
    <property type="term" value="F:peroxidase activity"/>
    <property type="evidence" value="ECO:0007669"/>
    <property type="project" value="TreeGrafter"/>
</dbReference>
<dbReference type="GO" id="GO:0042744">
    <property type="term" value="P:hydrogen peroxide catabolic process"/>
    <property type="evidence" value="ECO:0007669"/>
    <property type="project" value="TreeGrafter"/>
</dbReference>
<dbReference type="CDD" id="cd08925">
    <property type="entry name" value="Hb-beta-like"/>
    <property type="match status" value="1"/>
</dbReference>
<dbReference type="FunFam" id="1.10.490.10:FF:000001">
    <property type="entry name" value="Hemoglobin subunit beta"/>
    <property type="match status" value="1"/>
</dbReference>
<dbReference type="Gene3D" id="1.10.490.10">
    <property type="entry name" value="Globins"/>
    <property type="match status" value="1"/>
</dbReference>
<dbReference type="InterPro" id="IPR000971">
    <property type="entry name" value="Globin"/>
</dbReference>
<dbReference type="InterPro" id="IPR009050">
    <property type="entry name" value="Globin-like_sf"/>
</dbReference>
<dbReference type="InterPro" id="IPR012292">
    <property type="entry name" value="Globin/Proto"/>
</dbReference>
<dbReference type="InterPro" id="IPR002337">
    <property type="entry name" value="Hemoglobin_b"/>
</dbReference>
<dbReference type="InterPro" id="IPR050056">
    <property type="entry name" value="Hemoglobin_oxygen_transport"/>
</dbReference>
<dbReference type="PANTHER" id="PTHR11442">
    <property type="entry name" value="HEMOGLOBIN FAMILY MEMBER"/>
    <property type="match status" value="1"/>
</dbReference>
<dbReference type="PANTHER" id="PTHR11442:SF7">
    <property type="entry name" value="HEMOGLOBIN SUBUNIT EPSILON"/>
    <property type="match status" value="1"/>
</dbReference>
<dbReference type="Pfam" id="PF00042">
    <property type="entry name" value="Globin"/>
    <property type="match status" value="1"/>
</dbReference>
<dbReference type="PRINTS" id="PR00814">
    <property type="entry name" value="BETAHAEM"/>
</dbReference>
<dbReference type="SUPFAM" id="SSF46458">
    <property type="entry name" value="Globin-like"/>
    <property type="match status" value="1"/>
</dbReference>
<dbReference type="PROSITE" id="PS01033">
    <property type="entry name" value="GLOBIN"/>
    <property type="match status" value="1"/>
</dbReference>